<organism>
    <name type="scientific">Bacillus thuringiensis subsp. konkukian (strain 97-27)</name>
    <dbReference type="NCBI Taxonomy" id="281309"/>
    <lineage>
        <taxon>Bacteria</taxon>
        <taxon>Bacillati</taxon>
        <taxon>Bacillota</taxon>
        <taxon>Bacilli</taxon>
        <taxon>Bacillales</taxon>
        <taxon>Bacillaceae</taxon>
        <taxon>Bacillus</taxon>
        <taxon>Bacillus cereus group</taxon>
    </lineage>
</organism>
<feature type="chain" id="PRO_0000139867" description="Ribonuclease PH">
    <location>
        <begin position="1"/>
        <end position="245"/>
    </location>
</feature>
<feature type="binding site" evidence="1">
    <location>
        <position position="86"/>
    </location>
    <ligand>
        <name>phosphate</name>
        <dbReference type="ChEBI" id="CHEBI:43474"/>
        <note>substrate</note>
    </ligand>
</feature>
<feature type="binding site" evidence="1">
    <location>
        <begin position="124"/>
        <end position="126"/>
    </location>
    <ligand>
        <name>phosphate</name>
        <dbReference type="ChEBI" id="CHEBI:43474"/>
        <note>substrate</note>
    </ligand>
</feature>
<dbReference type="EC" id="2.7.7.56" evidence="1"/>
<dbReference type="EMBL" id="AE017355">
    <property type="protein sequence ID" value="AAT63709.1"/>
    <property type="molecule type" value="Genomic_DNA"/>
</dbReference>
<dbReference type="RefSeq" id="WP_001261764.1">
    <property type="nucleotide sequence ID" value="NC_005957.1"/>
</dbReference>
<dbReference type="RefSeq" id="YP_038534.1">
    <property type="nucleotide sequence ID" value="NC_005957.1"/>
</dbReference>
<dbReference type="SMR" id="Q6HD42"/>
<dbReference type="GeneID" id="45024354"/>
<dbReference type="KEGG" id="btk:BT9727_4218"/>
<dbReference type="PATRIC" id="fig|281309.8.peg.4496"/>
<dbReference type="HOGENOM" id="CLU_050858_0_0_9"/>
<dbReference type="Proteomes" id="UP000001301">
    <property type="component" value="Chromosome"/>
</dbReference>
<dbReference type="GO" id="GO:0000175">
    <property type="term" value="F:3'-5'-RNA exonuclease activity"/>
    <property type="evidence" value="ECO:0007669"/>
    <property type="project" value="UniProtKB-UniRule"/>
</dbReference>
<dbReference type="GO" id="GO:0000049">
    <property type="term" value="F:tRNA binding"/>
    <property type="evidence" value="ECO:0007669"/>
    <property type="project" value="UniProtKB-UniRule"/>
</dbReference>
<dbReference type="GO" id="GO:0009022">
    <property type="term" value="F:tRNA nucleotidyltransferase activity"/>
    <property type="evidence" value="ECO:0007669"/>
    <property type="project" value="UniProtKB-UniRule"/>
</dbReference>
<dbReference type="GO" id="GO:0016075">
    <property type="term" value="P:rRNA catabolic process"/>
    <property type="evidence" value="ECO:0007669"/>
    <property type="project" value="UniProtKB-UniRule"/>
</dbReference>
<dbReference type="GO" id="GO:0006364">
    <property type="term" value="P:rRNA processing"/>
    <property type="evidence" value="ECO:0007669"/>
    <property type="project" value="UniProtKB-KW"/>
</dbReference>
<dbReference type="GO" id="GO:0008033">
    <property type="term" value="P:tRNA processing"/>
    <property type="evidence" value="ECO:0007669"/>
    <property type="project" value="UniProtKB-UniRule"/>
</dbReference>
<dbReference type="CDD" id="cd11362">
    <property type="entry name" value="RNase_PH_bact"/>
    <property type="match status" value="1"/>
</dbReference>
<dbReference type="FunFam" id="3.30.230.70:FF:000003">
    <property type="entry name" value="Ribonuclease PH"/>
    <property type="match status" value="1"/>
</dbReference>
<dbReference type="Gene3D" id="3.30.230.70">
    <property type="entry name" value="GHMP Kinase, N-terminal domain"/>
    <property type="match status" value="1"/>
</dbReference>
<dbReference type="HAMAP" id="MF_00564">
    <property type="entry name" value="RNase_PH"/>
    <property type="match status" value="1"/>
</dbReference>
<dbReference type="InterPro" id="IPR001247">
    <property type="entry name" value="ExoRNase_PH_dom1"/>
</dbReference>
<dbReference type="InterPro" id="IPR015847">
    <property type="entry name" value="ExoRNase_PH_dom2"/>
</dbReference>
<dbReference type="InterPro" id="IPR036345">
    <property type="entry name" value="ExoRNase_PH_dom2_sf"/>
</dbReference>
<dbReference type="InterPro" id="IPR027408">
    <property type="entry name" value="PNPase/RNase_PH_dom_sf"/>
</dbReference>
<dbReference type="InterPro" id="IPR020568">
    <property type="entry name" value="Ribosomal_Su5_D2-typ_SF"/>
</dbReference>
<dbReference type="InterPro" id="IPR050080">
    <property type="entry name" value="RNase_PH"/>
</dbReference>
<dbReference type="InterPro" id="IPR002381">
    <property type="entry name" value="RNase_PH_bac-type"/>
</dbReference>
<dbReference type="InterPro" id="IPR018336">
    <property type="entry name" value="RNase_PH_CS"/>
</dbReference>
<dbReference type="NCBIfam" id="TIGR01966">
    <property type="entry name" value="RNasePH"/>
    <property type="match status" value="1"/>
</dbReference>
<dbReference type="PANTHER" id="PTHR11953">
    <property type="entry name" value="EXOSOME COMPLEX COMPONENT"/>
    <property type="match status" value="1"/>
</dbReference>
<dbReference type="PANTHER" id="PTHR11953:SF0">
    <property type="entry name" value="EXOSOME COMPLEX COMPONENT RRP41"/>
    <property type="match status" value="1"/>
</dbReference>
<dbReference type="Pfam" id="PF01138">
    <property type="entry name" value="RNase_PH"/>
    <property type="match status" value="1"/>
</dbReference>
<dbReference type="Pfam" id="PF03725">
    <property type="entry name" value="RNase_PH_C"/>
    <property type="match status" value="1"/>
</dbReference>
<dbReference type="SUPFAM" id="SSF55666">
    <property type="entry name" value="Ribonuclease PH domain 2-like"/>
    <property type="match status" value="1"/>
</dbReference>
<dbReference type="SUPFAM" id="SSF54211">
    <property type="entry name" value="Ribosomal protein S5 domain 2-like"/>
    <property type="match status" value="1"/>
</dbReference>
<dbReference type="PROSITE" id="PS01277">
    <property type="entry name" value="RIBONUCLEASE_PH"/>
    <property type="match status" value="1"/>
</dbReference>
<evidence type="ECO:0000255" key="1">
    <source>
        <dbReference type="HAMAP-Rule" id="MF_00564"/>
    </source>
</evidence>
<keyword id="KW-0548">Nucleotidyltransferase</keyword>
<keyword id="KW-0694">RNA-binding</keyword>
<keyword id="KW-0698">rRNA processing</keyword>
<keyword id="KW-0808">Transferase</keyword>
<keyword id="KW-0819">tRNA processing</keyword>
<keyword id="KW-0820">tRNA-binding</keyword>
<gene>
    <name evidence="1" type="primary">rph</name>
    <name type="ordered locus">BT9727_4218</name>
</gene>
<proteinExistence type="inferred from homology"/>
<sequence length="245" mass="26983">MRVDGREKTELRHIHIHTNYLKHPEGSVLIEVGDTKVICSATIEERVPPFMRGEGKGWVTAEYAMIPRATEQRTIRESSKGKVTGRTMEIQRLIGRALRAVVDLEALGERTVWIDCDVIQADGGTRTASITGAYVAMVLAFEKLLQAEKVSKIPVKDYLAATSVGIVEEQGVVLDLNYAEDSKADVDMNVIMTGKGQFVEVQGTGEEATFSRAQLNELLDAAEQGIFQLIDIQKEALGDIVSHIE</sequence>
<accession>Q6HD42</accession>
<protein>
    <recommendedName>
        <fullName evidence="1">Ribonuclease PH</fullName>
        <shortName evidence="1">RNase PH</shortName>
        <ecNumber evidence="1">2.7.7.56</ecNumber>
    </recommendedName>
    <alternativeName>
        <fullName evidence="1">tRNA nucleotidyltransferase</fullName>
    </alternativeName>
</protein>
<comment type="function">
    <text evidence="1">Phosphorolytic 3'-5' exoribonuclease that plays an important role in tRNA 3'-end maturation. Removes nucleotide residues following the 3'-CCA terminus of tRNAs; can also add nucleotides to the ends of RNA molecules by using nucleoside diphosphates as substrates, but this may not be physiologically important. Probably plays a role in initiation of 16S rRNA degradation (leading to ribosome degradation) during starvation.</text>
</comment>
<comment type="catalytic activity">
    <reaction evidence="1">
        <text>tRNA(n+1) + phosphate = tRNA(n) + a ribonucleoside 5'-diphosphate</text>
        <dbReference type="Rhea" id="RHEA:10628"/>
        <dbReference type="Rhea" id="RHEA-COMP:17343"/>
        <dbReference type="Rhea" id="RHEA-COMP:17344"/>
        <dbReference type="ChEBI" id="CHEBI:43474"/>
        <dbReference type="ChEBI" id="CHEBI:57930"/>
        <dbReference type="ChEBI" id="CHEBI:173114"/>
        <dbReference type="EC" id="2.7.7.56"/>
    </reaction>
</comment>
<comment type="subunit">
    <text evidence="1">Homohexameric ring arranged as a trimer of dimers.</text>
</comment>
<comment type="similarity">
    <text evidence="1">Belongs to the RNase PH family.</text>
</comment>
<reference key="1">
    <citation type="journal article" date="2006" name="J. Bacteriol.">
        <title>Pathogenomic sequence analysis of Bacillus cereus and Bacillus thuringiensis isolates closely related to Bacillus anthracis.</title>
        <authorList>
            <person name="Han C.S."/>
            <person name="Xie G."/>
            <person name="Challacombe J.F."/>
            <person name="Altherr M.R."/>
            <person name="Bhotika S.S."/>
            <person name="Bruce D."/>
            <person name="Campbell C.S."/>
            <person name="Campbell M.L."/>
            <person name="Chen J."/>
            <person name="Chertkov O."/>
            <person name="Cleland C."/>
            <person name="Dimitrijevic M."/>
            <person name="Doggett N.A."/>
            <person name="Fawcett J.J."/>
            <person name="Glavina T."/>
            <person name="Goodwin L.A."/>
            <person name="Hill K.K."/>
            <person name="Hitchcock P."/>
            <person name="Jackson P.J."/>
            <person name="Keim P."/>
            <person name="Kewalramani A.R."/>
            <person name="Longmire J."/>
            <person name="Lucas S."/>
            <person name="Malfatti S."/>
            <person name="McMurry K."/>
            <person name="Meincke L.J."/>
            <person name="Misra M."/>
            <person name="Moseman B.L."/>
            <person name="Mundt M."/>
            <person name="Munk A.C."/>
            <person name="Okinaka R.T."/>
            <person name="Parson-Quintana B."/>
            <person name="Reilly L.P."/>
            <person name="Richardson P."/>
            <person name="Robinson D.L."/>
            <person name="Rubin E."/>
            <person name="Saunders E."/>
            <person name="Tapia R."/>
            <person name="Tesmer J.G."/>
            <person name="Thayer N."/>
            <person name="Thompson L.S."/>
            <person name="Tice H."/>
            <person name="Ticknor L.O."/>
            <person name="Wills P.L."/>
            <person name="Brettin T.S."/>
            <person name="Gilna P."/>
        </authorList>
    </citation>
    <scope>NUCLEOTIDE SEQUENCE [LARGE SCALE GENOMIC DNA]</scope>
    <source>
        <strain>97-27</strain>
    </source>
</reference>
<name>RNPH_BACHK</name>